<keyword id="KW-0963">Cytoplasm</keyword>
<keyword id="KW-0690">Ribosome biogenesis</keyword>
<name>RBFA_BURP0</name>
<feature type="chain" id="PRO_0000321207" description="Ribosome-binding factor A">
    <location>
        <begin position="1"/>
        <end position="122"/>
    </location>
</feature>
<protein>
    <recommendedName>
        <fullName evidence="1">Ribosome-binding factor A</fullName>
    </recommendedName>
</protein>
<dbReference type="EMBL" id="CP000572">
    <property type="protein sequence ID" value="ABN91324.1"/>
    <property type="status" value="ALT_INIT"/>
    <property type="molecule type" value="Genomic_DNA"/>
</dbReference>
<dbReference type="RefSeq" id="WP_004199441.1">
    <property type="nucleotide sequence ID" value="NC_009076.1"/>
</dbReference>
<dbReference type="SMR" id="A3NUL1"/>
<dbReference type="GeneID" id="93060074"/>
<dbReference type="KEGG" id="bpl:BURPS1106A_1763"/>
<dbReference type="HOGENOM" id="CLU_089475_5_1_4"/>
<dbReference type="Proteomes" id="UP000006738">
    <property type="component" value="Chromosome I"/>
</dbReference>
<dbReference type="GO" id="GO:0005829">
    <property type="term" value="C:cytosol"/>
    <property type="evidence" value="ECO:0007669"/>
    <property type="project" value="TreeGrafter"/>
</dbReference>
<dbReference type="GO" id="GO:0043024">
    <property type="term" value="F:ribosomal small subunit binding"/>
    <property type="evidence" value="ECO:0007669"/>
    <property type="project" value="TreeGrafter"/>
</dbReference>
<dbReference type="GO" id="GO:0030490">
    <property type="term" value="P:maturation of SSU-rRNA"/>
    <property type="evidence" value="ECO:0007669"/>
    <property type="project" value="UniProtKB-UniRule"/>
</dbReference>
<dbReference type="Gene3D" id="3.30.300.20">
    <property type="match status" value="1"/>
</dbReference>
<dbReference type="HAMAP" id="MF_00003">
    <property type="entry name" value="RbfA"/>
    <property type="match status" value="1"/>
</dbReference>
<dbReference type="InterPro" id="IPR015946">
    <property type="entry name" value="KH_dom-like_a/b"/>
</dbReference>
<dbReference type="InterPro" id="IPR000238">
    <property type="entry name" value="RbfA"/>
</dbReference>
<dbReference type="InterPro" id="IPR023799">
    <property type="entry name" value="RbfA_dom_sf"/>
</dbReference>
<dbReference type="NCBIfam" id="TIGR00082">
    <property type="entry name" value="rbfA"/>
    <property type="match status" value="1"/>
</dbReference>
<dbReference type="PANTHER" id="PTHR33515">
    <property type="entry name" value="RIBOSOME-BINDING FACTOR A, CHLOROPLASTIC-RELATED"/>
    <property type="match status" value="1"/>
</dbReference>
<dbReference type="PANTHER" id="PTHR33515:SF1">
    <property type="entry name" value="RIBOSOME-BINDING FACTOR A, CHLOROPLASTIC-RELATED"/>
    <property type="match status" value="1"/>
</dbReference>
<dbReference type="Pfam" id="PF02033">
    <property type="entry name" value="RBFA"/>
    <property type="match status" value="1"/>
</dbReference>
<dbReference type="SUPFAM" id="SSF89919">
    <property type="entry name" value="Ribosome-binding factor A, RbfA"/>
    <property type="match status" value="1"/>
</dbReference>
<reference key="1">
    <citation type="journal article" date="2010" name="Genome Biol. Evol.">
        <title>Continuing evolution of Burkholderia mallei through genome reduction and large-scale rearrangements.</title>
        <authorList>
            <person name="Losada L."/>
            <person name="Ronning C.M."/>
            <person name="DeShazer D."/>
            <person name="Woods D."/>
            <person name="Fedorova N."/>
            <person name="Kim H.S."/>
            <person name="Shabalina S.A."/>
            <person name="Pearson T.R."/>
            <person name="Brinkac L."/>
            <person name="Tan P."/>
            <person name="Nandi T."/>
            <person name="Crabtree J."/>
            <person name="Badger J."/>
            <person name="Beckstrom-Sternberg S."/>
            <person name="Saqib M."/>
            <person name="Schutzer S.E."/>
            <person name="Keim P."/>
            <person name="Nierman W.C."/>
        </authorList>
    </citation>
    <scope>NUCLEOTIDE SEQUENCE [LARGE SCALE GENOMIC DNA]</scope>
    <source>
        <strain>1106a</strain>
    </source>
</reference>
<accession>A3NUL1</accession>
<comment type="function">
    <text evidence="1">One of several proteins that assist in the late maturation steps of the functional core of the 30S ribosomal subunit. Associates with free 30S ribosomal subunits (but not with 30S subunits that are part of 70S ribosomes or polysomes). Required for efficient processing of 16S rRNA. May interact with the 5'-terminal helix region of 16S rRNA.</text>
</comment>
<comment type="subunit">
    <text evidence="1">Monomer. Binds 30S ribosomal subunits, but not 50S ribosomal subunits or 70S ribosomes.</text>
</comment>
<comment type="subcellular location">
    <subcellularLocation>
        <location evidence="1">Cytoplasm</location>
    </subcellularLocation>
</comment>
<comment type="similarity">
    <text evidence="1">Belongs to the RbfA family.</text>
</comment>
<comment type="sequence caution" evidence="2">
    <conflict type="erroneous initiation">
        <sequence resource="EMBL-CDS" id="ABN91324"/>
    </conflict>
    <text>Extended N-terminus.</text>
</comment>
<evidence type="ECO:0000255" key="1">
    <source>
        <dbReference type="HAMAP-Rule" id="MF_00003"/>
    </source>
</evidence>
<evidence type="ECO:0000305" key="2"/>
<organism>
    <name type="scientific">Burkholderia pseudomallei (strain 1106a)</name>
    <dbReference type="NCBI Taxonomy" id="357348"/>
    <lineage>
        <taxon>Bacteria</taxon>
        <taxon>Pseudomonadati</taxon>
        <taxon>Pseudomonadota</taxon>
        <taxon>Betaproteobacteria</taxon>
        <taxon>Burkholderiales</taxon>
        <taxon>Burkholderiaceae</taxon>
        <taxon>Burkholderia</taxon>
        <taxon>pseudomallei group</taxon>
    </lineage>
</organism>
<sequence>MSKKRSSPNRNVQIADQIQRDLSELIMREVKDPRIGIVTIQSVELTPDYAHAKVYFTALTGTPADTQEALNHAAGHLHNLLFKRLHIHTVPTLHFHYDQTIEKAVAMSRLIDEANATRAKDD</sequence>
<proteinExistence type="inferred from homology"/>
<gene>
    <name evidence="1" type="primary">rbfA</name>
    <name type="ordered locus">BURPS1106A_1763</name>
</gene>